<reference key="1">
    <citation type="journal article" date="2006" name="Genome Res.">
        <title>Skewed genomic variability in strains of the toxigenic bacterial pathogen, Clostridium perfringens.</title>
        <authorList>
            <person name="Myers G.S.A."/>
            <person name="Rasko D.A."/>
            <person name="Cheung J.K."/>
            <person name="Ravel J."/>
            <person name="Seshadri R."/>
            <person name="DeBoy R.T."/>
            <person name="Ren Q."/>
            <person name="Varga J."/>
            <person name="Awad M.M."/>
            <person name="Brinkac L.M."/>
            <person name="Daugherty S.C."/>
            <person name="Haft D.H."/>
            <person name="Dodson R.J."/>
            <person name="Madupu R."/>
            <person name="Nelson W.C."/>
            <person name="Rosovitz M.J."/>
            <person name="Sullivan S.A."/>
            <person name="Khouri H."/>
            <person name="Dimitrov G.I."/>
            <person name="Watkins K.L."/>
            <person name="Mulligan S."/>
            <person name="Benton J."/>
            <person name="Radune D."/>
            <person name="Fisher D.J."/>
            <person name="Atkins H.S."/>
            <person name="Hiscox T."/>
            <person name="Jost B.H."/>
            <person name="Billington S.J."/>
            <person name="Songer J.G."/>
            <person name="McClane B.A."/>
            <person name="Titball R.W."/>
            <person name="Rood J.I."/>
            <person name="Melville S.B."/>
            <person name="Paulsen I.T."/>
        </authorList>
    </citation>
    <scope>NUCLEOTIDE SEQUENCE [LARGE SCALE GENOMIC DNA]</scope>
    <source>
        <strain>SM101 / Type A</strain>
    </source>
</reference>
<name>RL24_CLOPS</name>
<feature type="chain" id="PRO_0000355668" description="Large ribosomal subunit protein uL24">
    <location>
        <begin position="1"/>
        <end position="104"/>
    </location>
</feature>
<gene>
    <name evidence="1" type="primary">rplX</name>
    <name type="ordered locus">CPR_2388</name>
</gene>
<protein>
    <recommendedName>
        <fullName evidence="1">Large ribosomal subunit protein uL24</fullName>
    </recommendedName>
    <alternativeName>
        <fullName evidence="2">50S ribosomal protein L24</fullName>
    </alternativeName>
</protein>
<organism>
    <name type="scientific">Clostridium perfringens (strain SM101 / Type A)</name>
    <dbReference type="NCBI Taxonomy" id="289380"/>
    <lineage>
        <taxon>Bacteria</taxon>
        <taxon>Bacillati</taxon>
        <taxon>Bacillota</taxon>
        <taxon>Clostridia</taxon>
        <taxon>Eubacteriales</taxon>
        <taxon>Clostridiaceae</taxon>
        <taxon>Clostridium</taxon>
    </lineage>
</organism>
<sequence length="104" mass="11529">MKVHVRKNDTVVVISGKDKGKTGEVLRVIPKTGKVVVKGVNLVKKHQKPNRQNMQGGIIEMEAAINSSKVMLFCEKCKKATRISHKLLENGAKVRVCKKCGETF</sequence>
<dbReference type="EMBL" id="CP000312">
    <property type="protein sequence ID" value="ABG86949.1"/>
    <property type="molecule type" value="Genomic_DNA"/>
</dbReference>
<dbReference type="RefSeq" id="WP_011593134.1">
    <property type="nucleotide sequence ID" value="NC_008262.1"/>
</dbReference>
<dbReference type="SMR" id="Q0SQF5"/>
<dbReference type="KEGG" id="cpr:CPR_2388"/>
<dbReference type="Proteomes" id="UP000001824">
    <property type="component" value="Chromosome"/>
</dbReference>
<dbReference type="GO" id="GO:1990904">
    <property type="term" value="C:ribonucleoprotein complex"/>
    <property type="evidence" value="ECO:0007669"/>
    <property type="project" value="UniProtKB-KW"/>
</dbReference>
<dbReference type="GO" id="GO:0005840">
    <property type="term" value="C:ribosome"/>
    <property type="evidence" value="ECO:0007669"/>
    <property type="project" value="UniProtKB-KW"/>
</dbReference>
<dbReference type="GO" id="GO:0019843">
    <property type="term" value="F:rRNA binding"/>
    <property type="evidence" value="ECO:0007669"/>
    <property type="project" value="UniProtKB-UniRule"/>
</dbReference>
<dbReference type="GO" id="GO:0003735">
    <property type="term" value="F:structural constituent of ribosome"/>
    <property type="evidence" value="ECO:0007669"/>
    <property type="project" value="InterPro"/>
</dbReference>
<dbReference type="GO" id="GO:0006412">
    <property type="term" value="P:translation"/>
    <property type="evidence" value="ECO:0007669"/>
    <property type="project" value="UniProtKB-UniRule"/>
</dbReference>
<dbReference type="CDD" id="cd06089">
    <property type="entry name" value="KOW_RPL26"/>
    <property type="match status" value="1"/>
</dbReference>
<dbReference type="FunFam" id="2.30.30.30:FF:000004">
    <property type="entry name" value="50S ribosomal protein L24"/>
    <property type="match status" value="1"/>
</dbReference>
<dbReference type="Gene3D" id="2.30.30.30">
    <property type="match status" value="1"/>
</dbReference>
<dbReference type="HAMAP" id="MF_01326_B">
    <property type="entry name" value="Ribosomal_uL24_B"/>
    <property type="match status" value="1"/>
</dbReference>
<dbReference type="InterPro" id="IPR005824">
    <property type="entry name" value="KOW"/>
</dbReference>
<dbReference type="InterPro" id="IPR014722">
    <property type="entry name" value="Rib_uL2_dom2"/>
</dbReference>
<dbReference type="InterPro" id="IPR003256">
    <property type="entry name" value="Ribosomal_uL24"/>
</dbReference>
<dbReference type="InterPro" id="IPR005825">
    <property type="entry name" value="Ribosomal_uL24_CS"/>
</dbReference>
<dbReference type="InterPro" id="IPR041988">
    <property type="entry name" value="Ribosomal_uL24_KOW"/>
</dbReference>
<dbReference type="InterPro" id="IPR008991">
    <property type="entry name" value="Translation_prot_SH3-like_sf"/>
</dbReference>
<dbReference type="NCBIfam" id="TIGR01079">
    <property type="entry name" value="rplX_bact"/>
    <property type="match status" value="1"/>
</dbReference>
<dbReference type="PANTHER" id="PTHR12903">
    <property type="entry name" value="MITOCHONDRIAL RIBOSOMAL PROTEIN L24"/>
    <property type="match status" value="1"/>
</dbReference>
<dbReference type="Pfam" id="PF00467">
    <property type="entry name" value="KOW"/>
    <property type="match status" value="1"/>
</dbReference>
<dbReference type="Pfam" id="PF17136">
    <property type="entry name" value="ribosomal_L24"/>
    <property type="match status" value="1"/>
</dbReference>
<dbReference type="SMART" id="SM00739">
    <property type="entry name" value="KOW"/>
    <property type="match status" value="1"/>
</dbReference>
<dbReference type="SUPFAM" id="SSF50104">
    <property type="entry name" value="Translation proteins SH3-like domain"/>
    <property type="match status" value="1"/>
</dbReference>
<dbReference type="PROSITE" id="PS01108">
    <property type="entry name" value="RIBOSOMAL_L24"/>
    <property type="match status" value="1"/>
</dbReference>
<proteinExistence type="inferred from homology"/>
<accession>Q0SQF5</accession>
<keyword id="KW-0687">Ribonucleoprotein</keyword>
<keyword id="KW-0689">Ribosomal protein</keyword>
<keyword id="KW-0694">RNA-binding</keyword>
<keyword id="KW-0699">rRNA-binding</keyword>
<comment type="function">
    <text evidence="1">One of two assembly initiator proteins, it binds directly to the 5'-end of the 23S rRNA, where it nucleates assembly of the 50S subunit.</text>
</comment>
<comment type="function">
    <text evidence="1">One of the proteins that surrounds the polypeptide exit tunnel on the outside of the subunit.</text>
</comment>
<comment type="subunit">
    <text evidence="1">Part of the 50S ribosomal subunit.</text>
</comment>
<comment type="similarity">
    <text evidence="1">Belongs to the universal ribosomal protein uL24 family.</text>
</comment>
<evidence type="ECO:0000255" key="1">
    <source>
        <dbReference type="HAMAP-Rule" id="MF_01326"/>
    </source>
</evidence>
<evidence type="ECO:0000305" key="2"/>